<protein>
    <recommendedName>
        <fullName>H/ACA ribonucleoprotein complex non-core subunit NAF1</fullName>
    </recommendedName>
</protein>
<organism>
    <name type="scientific">Mus musculus</name>
    <name type="common">Mouse</name>
    <dbReference type="NCBI Taxonomy" id="10090"/>
    <lineage>
        <taxon>Eukaryota</taxon>
        <taxon>Metazoa</taxon>
        <taxon>Chordata</taxon>
        <taxon>Craniata</taxon>
        <taxon>Vertebrata</taxon>
        <taxon>Euteleostomi</taxon>
        <taxon>Mammalia</taxon>
        <taxon>Eutheria</taxon>
        <taxon>Euarchontoglires</taxon>
        <taxon>Glires</taxon>
        <taxon>Rodentia</taxon>
        <taxon>Myomorpha</taxon>
        <taxon>Muroidea</taxon>
        <taxon>Muridae</taxon>
        <taxon>Murinae</taxon>
        <taxon>Mus</taxon>
        <taxon>Mus</taxon>
    </lineage>
</organism>
<accession>Q3UMQ8</accession>
<accession>Q8R2W2</accession>
<gene>
    <name type="primary">Naf1</name>
</gene>
<dbReference type="EMBL" id="AC116731">
    <property type="status" value="NOT_ANNOTATED_CDS"/>
    <property type="molecule type" value="Genomic_DNA"/>
</dbReference>
<dbReference type="EMBL" id="AK144735">
    <property type="protein sequence ID" value="BAE26040.1"/>
    <property type="status" value="ALT_INIT"/>
    <property type="molecule type" value="mRNA"/>
</dbReference>
<dbReference type="EMBL" id="BC027148">
    <property type="protein sequence ID" value="AAH27148.1"/>
    <property type="molecule type" value="mRNA"/>
</dbReference>
<dbReference type="RefSeq" id="NP_001157036.1">
    <property type="nucleotide sequence ID" value="NM_001163564.1"/>
</dbReference>
<dbReference type="SMR" id="Q3UMQ8"/>
<dbReference type="BioGRID" id="231512">
    <property type="interactions" value="3"/>
</dbReference>
<dbReference type="FunCoup" id="Q3UMQ8">
    <property type="interactions" value="1278"/>
</dbReference>
<dbReference type="STRING" id="10090.ENSMUSP00000112640"/>
<dbReference type="iPTMnet" id="Q3UMQ8"/>
<dbReference type="PhosphoSitePlus" id="Q3UMQ8"/>
<dbReference type="jPOST" id="Q3UMQ8"/>
<dbReference type="PaxDb" id="10090-ENSMUSP00000112640"/>
<dbReference type="ProteomicsDB" id="287602"/>
<dbReference type="Pumba" id="Q3UMQ8"/>
<dbReference type="GeneID" id="234344"/>
<dbReference type="KEGG" id="mmu:234344"/>
<dbReference type="AGR" id="MGI:2682306"/>
<dbReference type="CTD" id="92345"/>
<dbReference type="MGI" id="MGI:2682306">
    <property type="gene designation" value="Naf1"/>
</dbReference>
<dbReference type="InParanoid" id="Q3UMQ8"/>
<dbReference type="OrthoDB" id="21550at2759"/>
<dbReference type="PhylomeDB" id="Q3UMQ8"/>
<dbReference type="BioGRID-ORCS" id="234344">
    <property type="hits" value="21 hits in 77 CRISPR screens"/>
</dbReference>
<dbReference type="ChiTaRS" id="Naf1">
    <property type="organism name" value="mouse"/>
</dbReference>
<dbReference type="PRO" id="PR:Q3UMQ8"/>
<dbReference type="Proteomes" id="UP000000589">
    <property type="component" value="Unplaced"/>
</dbReference>
<dbReference type="RNAct" id="Q3UMQ8">
    <property type="molecule type" value="protein"/>
</dbReference>
<dbReference type="GO" id="GO:0005737">
    <property type="term" value="C:cytoplasm"/>
    <property type="evidence" value="ECO:0000250"/>
    <property type="project" value="UniProtKB"/>
</dbReference>
<dbReference type="GO" id="GO:0005634">
    <property type="term" value="C:nucleus"/>
    <property type="evidence" value="ECO:0000250"/>
    <property type="project" value="UniProtKB"/>
</dbReference>
<dbReference type="GO" id="GO:0005732">
    <property type="term" value="C:sno(s)RNA-containing ribonucleoprotein complex"/>
    <property type="evidence" value="ECO:0000250"/>
    <property type="project" value="UniProtKB"/>
</dbReference>
<dbReference type="GO" id="GO:0003723">
    <property type="term" value="F:RNA binding"/>
    <property type="evidence" value="ECO:0000250"/>
    <property type="project" value="UniProtKB"/>
</dbReference>
<dbReference type="GO" id="GO:0000493">
    <property type="term" value="P:box H/ACA snoRNP assembly"/>
    <property type="evidence" value="ECO:0000304"/>
    <property type="project" value="BHF-UCL"/>
</dbReference>
<dbReference type="GO" id="GO:0042254">
    <property type="term" value="P:ribosome biogenesis"/>
    <property type="evidence" value="ECO:0000250"/>
    <property type="project" value="UniProtKB"/>
</dbReference>
<dbReference type="GO" id="GO:0043489">
    <property type="term" value="P:RNA stabilization"/>
    <property type="evidence" value="ECO:0000315"/>
    <property type="project" value="UniProtKB"/>
</dbReference>
<dbReference type="GO" id="GO:0000454">
    <property type="term" value="P:snoRNA guided rRNA pseudouridine synthesis"/>
    <property type="evidence" value="ECO:0000304"/>
    <property type="project" value="BHF-UCL"/>
</dbReference>
<dbReference type="FunFam" id="2.40.10.230:FF:000002">
    <property type="entry name" value="H/ACA ribonucleoprotein complex non-core subunit NAF1"/>
    <property type="match status" value="1"/>
</dbReference>
<dbReference type="Gene3D" id="2.40.10.230">
    <property type="entry name" value="Probable tRNA pseudouridine synthase domain"/>
    <property type="match status" value="1"/>
</dbReference>
<dbReference type="InterPro" id="IPR038664">
    <property type="entry name" value="Gar1/Naf1_Cbf5-bd_sf"/>
</dbReference>
<dbReference type="InterPro" id="IPR007504">
    <property type="entry name" value="H/ACA_rnp_Gar1/Naf1"/>
</dbReference>
<dbReference type="InterPro" id="IPR040309">
    <property type="entry name" value="Naf1"/>
</dbReference>
<dbReference type="InterPro" id="IPR009000">
    <property type="entry name" value="Transl_B-barrel_sf"/>
</dbReference>
<dbReference type="PANTHER" id="PTHR31633">
    <property type="entry name" value="H/ACA RIBONUCLEOPROTEIN COMPLEX NON-CORE SUBUNIT NAF1"/>
    <property type="match status" value="1"/>
</dbReference>
<dbReference type="PANTHER" id="PTHR31633:SF1">
    <property type="entry name" value="H_ACA RIBONUCLEOPROTEIN COMPLEX NON-CORE SUBUNIT NAF1"/>
    <property type="match status" value="1"/>
</dbReference>
<dbReference type="Pfam" id="PF04410">
    <property type="entry name" value="Gar1"/>
    <property type="match status" value="1"/>
</dbReference>
<dbReference type="SUPFAM" id="SSF50447">
    <property type="entry name" value="Translation proteins"/>
    <property type="match status" value="1"/>
</dbReference>
<sequence length="489" mass="53246">MEVVEAAAQLQTLKFGGSGQGSAAPQPPEDRREAPPPGVQPPPPAPSGRPPPPPAPSSDPGGRPPPPPAPNWDAGGRPPPPPAPNSDPPPGGAWVTGRNAAEPPPVLQASDSSDSDSDSETDSDSSSSSSSSSSSSSSCVSFPPVLSDGDEDFQLEKENKNFPLKTKDELLLNELPSVEELTVILPEDIALKPLGKVSSIIEQLVIIESVTNIPPVNEDTVIFKSDRQAAGKIFEIFGPVAHPFYVLRFNSSDHIESKGIKINDTMYFAPSMKDFTQYIFTEKLKQDRGSDASWKNDQEPPPEVLDFSDDEKEKEAKQRKKSQIQGRKKLKSELNESGEDFGEVHENWNAYSSSEHSKGYHHREFSRGFARGRYSRRSHGRPPPQQYYNSDHMASQESLGFTPQRQDNPVMPHYPFPPPMFDMHNFPLPPPPPPPPPPPPSMGWAAPSMASHPVLNLPYSMPPPPLPPPPPPPPPSPGENNSSHFGPYF</sequence>
<proteinExistence type="evidence at protein level"/>
<reference key="1">
    <citation type="journal article" date="2009" name="PLoS Biol.">
        <title>Lineage-specific biology revealed by a finished genome assembly of the mouse.</title>
        <authorList>
            <person name="Church D.M."/>
            <person name="Goodstadt L."/>
            <person name="Hillier L.W."/>
            <person name="Zody M.C."/>
            <person name="Goldstein S."/>
            <person name="She X."/>
            <person name="Bult C.J."/>
            <person name="Agarwala R."/>
            <person name="Cherry J.L."/>
            <person name="DiCuccio M."/>
            <person name="Hlavina W."/>
            <person name="Kapustin Y."/>
            <person name="Meric P."/>
            <person name="Maglott D."/>
            <person name="Birtle Z."/>
            <person name="Marques A.C."/>
            <person name="Graves T."/>
            <person name="Zhou S."/>
            <person name="Teague B."/>
            <person name="Potamousis K."/>
            <person name="Churas C."/>
            <person name="Place M."/>
            <person name="Herschleb J."/>
            <person name="Runnheim R."/>
            <person name="Forrest D."/>
            <person name="Amos-Landgraf J."/>
            <person name="Schwartz D.C."/>
            <person name="Cheng Z."/>
            <person name="Lindblad-Toh K."/>
            <person name="Eichler E.E."/>
            <person name="Ponting C.P."/>
        </authorList>
    </citation>
    <scope>NUCLEOTIDE SEQUENCE [LARGE SCALE GENOMIC DNA]</scope>
    <source>
        <strain>C57BL/6J</strain>
    </source>
</reference>
<reference key="2">
    <citation type="journal article" date="2005" name="Science">
        <title>The transcriptional landscape of the mammalian genome.</title>
        <authorList>
            <person name="Carninci P."/>
            <person name="Kasukawa T."/>
            <person name="Katayama S."/>
            <person name="Gough J."/>
            <person name="Frith M.C."/>
            <person name="Maeda N."/>
            <person name="Oyama R."/>
            <person name="Ravasi T."/>
            <person name="Lenhard B."/>
            <person name="Wells C."/>
            <person name="Kodzius R."/>
            <person name="Shimokawa K."/>
            <person name="Bajic V.B."/>
            <person name="Brenner S.E."/>
            <person name="Batalov S."/>
            <person name="Forrest A.R."/>
            <person name="Zavolan M."/>
            <person name="Davis M.J."/>
            <person name="Wilming L.G."/>
            <person name="Aidinis V."/>
            <person name="Allen J.E."/>
            <person name="Ambesi-Impiombato A."/>
            <person name="Apweiler R."/>
            <person name="Aturaliya R.N."/>
            <person name="Bailey T.L."/>
            <person name="Bansal M."/>
            <person name="Baxter L."/>
            <person name="Beisel K.W."/>
            <person name="Bersano T."/>
            <person name="Bono H."/>
            <person name="Chalk A.M."/>
            <person name="Chiu K.P."/>
            <person name="Choudhary V."/>
            <person name="Christoffels A."/>
            <person name="Clutterbuck D.R."/>
            <person name="Crowe M.L."/>
            <person name="Dalla E."/>
            <person name="Dalrymple B.P."/>
            <person name="de Bono B."/>
            <person name="Della Gatta G."/>
            <person name="di Bernardo D."/>
            <person name="Down T."/>
            <person name="Engstrom P."/>
            <person name="Fagiolini M."/>
            <person name="Faulkner G."/>
            <person name="Fletcher C.F."/>
            <person name="Fukushima T."/>
            <person name="Furuno M."/>
            <person name="Futaki S."/>
            <person name="Gariboldi M."/>
            <person name="Georgii-Hemming P."/>
            <person name="Gingeras T.R."/>
            <person name="Gojobori T."/>
            <person name="Green R.E."/>
            <person name="Gustincich S."/>
            <person name="Harbers M."/>
            <person name="Hayashi Y."/>
            <person name="Hensch T.K."/>
            <person name="Hirokawa N."/>
            <person name="Hill D."/>
            <person name="Huminiecki L."/>
            <person name="Iacono M."/>
            <person name="Ikeo K."/>
            <person name="Iwama A."/>
            <person name="Ishikawa T."/>
            <person name="Jakt M."/>
            <person name="Kanapin A."/>
            <person name="Katoh M."/>
            <person name="Kawasawa Y."/>
            <person name="Kelso J."/>
            <person name="Kitamura H."/>
            <person name="Kitano H."/>
            <person name="Kollias G."/>
            <person name="Krishnan S.P."/>
            <person name="Kruger A."/>
            <person name="Kummerfeld S.K."/>
            <person name="Kurochkin I.V."/>
            <person name="Lareau L.F."/>
            <person name="Lazarevic D."/>
            <person name="Lipovich L."/>
            <person name="Liu J."/>
            <person name="Liuni S."/>
            <person name="McWilliam S."/>
            <person name="Madan Babu M."/>
            <person name="Madera M."/>
            <person name="Marchionni L."/>
            <person name="Matsuda H."/>
            <person name="Matsuzawa S."/>
            <person name="Miki H."/>
            <person name="Mignone F."/>
            <person name="Miyake S."/>
            <person name="Morris K."/>
            <person name="Mottagui-Tabar S."/>
            <person name="Mulder N."/>
            <person name="Nakano N."/>
            <person name="Nakauchi H."/>
            <person name="Ng P."/>
            <person name="Nilsson R."/>
            <person name="Nishiguchi S."/>
            <person name="Nishikawa S."/>
            <person name="Nori F."/>
            <person name="Ohara O."/>
            <person name="Okazaki Y."/>
            <person name="Orlando V."/>
            <person name="Pang K.C."/>
            <person name="Pavan W.J."/>
            <person name="Pavesi G."/>
            <person name="Pesole G."/>
            <person name="Petrovsky N."/>
            <person name="Piazza S."/>
            <person name="Reed J."/>
            <person name="Reid J.F."/>
            <person name="Ring B.Z."/>
            <person name="Ringwald M."/>
            <person name="Rost B."/>
            <person name="Ruan Y."/>
            <person name="Salzberg S.L."/>
            <person name="Sandelin A."/>
            <person name="Schneider C."/>
            <person name="Schoenbach C."/>
            <person name="Sekiguchi K."/>
            <person name="Semple C.A."/>
            <person name="Seno S."/>
            <person name="Sessa L."/>
            <person name="Sheng Y."/>
            <person name="Shibata Y."/>
            <person name="Shimada H."/>
            <person name="Shimada K."/>
            <person name="Silva D."/>
            <person name="Sinclair B."/>
            <person name="Sperling S."/>
            <person name="Stupka E."/>
            <person name="Sugiura K."/>
            <person name="Sultana R."/>
            <person name="Takenaka Y."/>
            <person name="Taki K."/>
            <person name="Tammoja K."/>
            <person name="Tan S.L."/>
            <person name="Tang S."/>
            <person name="Taylor M.S."/>
            <person name="Tegner J."/>
            <person name="Teichmann S.A."/>
            <person name="Ueda H.R."/>
            <person name="van Nimwegen E."/>
            <person name="Verardo R."/>
            <person name="Wei C.L."/>
            <person name="Yagi K."/>
            <person name="Yamanishi H."/>
            <person name="Zabarovsky E."/>
            <person name="Zhu S."/>
            <person name="Zimmer A."/>
            <person name="Hide W."/>
            <person name="Bult C."/>
            <person name="Grimmond S.M."/>
            <person name="Teasdale R.D."/>
            <person name="Liu E.T."/>
            <person name="Brusic V."/>
            <person name="Quackenbush J."/>
            <person name="Wahlestedt C."/>
            <person name="Mattick J.S."/>
            <person name="Hume D.A."/>
            <person name="Kai C."/>
            <person name="Sasaki D."/>
            <person name="Tomaru Y."/>
            <person name="Fukuda S."/>
            <person name="Kanamori-Katayama M."/>
            <person name="Suzuki M."/>
            <person name="Aoki J."/>
            <person name="Arakawa T."/>
            <person name="Iida J."/>
            <person name="Imamura K."/>
            <person name="Itoh M."/>
            <person name="Kato T."/>
            <person name="Kawaji H."/>
            <person name="Kawagashira N."/>
            <person name="Kawashima T."/>
            <person name="Kojima M."/>
            <person name="Kondo S."/>
            <person name="Konno H."/>
            <person name="Nakano K."/>
            <person name="Ninomiya N."/>
            <person name="Nishio T."/>
            <person name="Okada M."/>
            <person name="Plessy C."/>
            <person name="Shibata K."/>
            <person name="Shiraki T."/>
            <person name="Suzuki S."/>
            <person name="Tagami M."/>
            <person name="Waki K."/>
            <person name="Watahiki A."/>
            <person name="Okamura-Oho Y."/>
            <person name="Suzuki H."/>
            <person name="Kawai J."/>
            <person name="Hayashizaki Y."/>
        </authorList>
    </citation>
    <scope>NUCLEOTIDE SEQUENCE [LARGE SCALE MRNA] OF 95-489</scope>
    <source>
        <tissue>Lung</tissue>
    </source>
</reference>
<reference key="3">
    <citation type="journal article" date="2004" name="Genome Res.">
        <title>The status, quality, and expansion of the NIH full-length cDNA project: the Mammalian Gene Collection (MGC).</title>
        <authorList>
            <consortium name="The MGC Project Team"/>
        </authorList>
    </citation>
    <scope>NUCLEOTIDE SEQUENCE [LARGE SCALE MRNA] OF 249-489</scope>
    <source>
        <strain>FVB/N</strain>
        <tissue>Mammary tumor</tissue>
    </source>
</reference>
<reference key="4">
    <citation type="journal article" date="2007" name="Proc. Natl. Acad. Sci. U.S.A.">
        <title>Large-scale phosphorylation analysis of mouse liver.</title>
        <authorList>
            <person name="Villen J."/>
            <person name="Beausoleil S.A."/>
            <person name="Gerber S.A."/>
            <person name="Gygi S.P."/>
        </authorList>
    </citation>
    <scope>PHOSPHORYLATION [LARGE SCALE ANALYSIS] AT SER-308</scope>
    <scope>IDENTIFICATION BY MASS SPECTROMETRY [LARGE SCALE ANALYSIS]</scope>
    <source>
        <tissue>Liver</tissue>
    </source>
</reference>
<reference key="5">
    <citation type="journal article" date="2010" name="Cell">
        <title>A tissue-specific atlas of mouse protein phosphorylation and expression.</title>
        <authorList>
            <person name="Huttlin E.L."/>
            <person name="Jedrychowski M.P."/>
            <person name="Elias J.E."/>
            <person name="Goswami T."/>
            <person name="Rad R."/>
            <person name="Beausoleil S.A."/>
            <person name="Villen J."/>
            <person name="Haas W."/>
            <person name="Sowa M.E."/>
            <person name="Gygi S.P."/>
        </authorList>
    </citation>
    <scope>PHOSPHORYLATION [LARGE SCALE ANALYSIS] AT SER-308</scope>
    <scope>IDENTIFICATION BY MASS SPECTROMETRY [LARGE SCALE ANALYSIS]</scope>
    <source>
        <tissue>Kidney</tissue>
        <tissue>Spleen</tissue>
    </source>
</reference>
<reference key="6">
    <citation type="journal article" date="2016" name="Sci. Transl. Med.">
        <title>Loss-of-function mutations in the RNA biogenesis factor NAF1 predispose to pulmonary fibrosis-emphysema.</title>
        <authorList>
            <person name="Stanley S.E."/>
            <person name="Gable D.L."/>
            <person name="Wagner C.L."/>
            <person name="Carlile T.M."/>
            <person name="Hanumanthu V.S."/>
            <person name="Podlevsky J.D."/>
            <person name="Khalil S.E."/>
            <person name="DeZern A.E."/>
            <person name="Rojas-Duran M.F."/>
            <person name="Applegate C.D."/>
            <person name="Alder J.K."/>
            <person name="Parry E.M."/>
            <person name="Gilbert W.V."/>
            <person name="Armanios M."/>
        </authorList>
    </citation>
    <scope>FUNCTION</scope>
</reference>
<keyword id="KW-0007">Acetylation</keyword>
<keyword id="KW-0963">Cytoplasm</keyword>
<keyword id="KW-1017">Isopeptide bond</keyword>
<keyword id="KW-0539">Nucleus</keyword>
<keyword id="KW-0597">Phosphoprotein</keyword>
<keyword id="KW-1185">Reference proteome</keyword>
<keyword id="KW-0687">Ribonucleoprotein</keyword>
<keyword id="KW-0690">Ribosome biogenesis</keyword>
<keyword id="KW-0694">RNA-binding</keyword>
<keyword id="KW-0698">rRNA processing</keyword>
<keyword id="KW-0832">Ubl conjugation</keyword>
<comment type="function">
    <text evidence="5">RNA-binding protein required for the maturation of box H/ACA snoRNPs complex and ribosome biogenesis. During assembly of the H/ACA snoRNPs complex, it associates with the complex and disappears during maturation of the complex and is replaced by NOLA1/GAR1 to yield mature H/ACA snoRNPs complex. Probably competes with NOLA1/GAR1 for binding with DKC1/NOLA4.</text>
</comment>
<comment type="subunit">
    <text evidence="1">During assembly of the complex, component of the small nucleolar ribonucleoprotein particles containing H/ACA-type snoRNAs (H/ACA snoRNPs) which contains NOLA2/NHP2, NOLA3/NOP10, NAF1 and DKC1/NOLA4. Interacts directly with DKC1/NOLA4 (By similarity).</text>
</comment>
<comment type="subcellular location">
    <subcellularLocation>
        <location evidence="2">Cytoplasm</location>
    </subcellularLocation>
    <subcellularLocation>
        <location evidence="2">Nucleus</location>
    </subcellularLocation>
    <text evidence="2">Shuttles between the cytoplasm and the nucleus. Absent from the nucleolus (By similarity).</text>
</comment>
<comment type="similarity">
    <text evidence="6">Belongs to the NAF1 family.</text>
</comment>
<comment type="sequence caution" evidence="6">
    <conflict type="erroneous initiation">
        <sequence resource="EMBL-CDS" id="BAE26040"/>
    </conflict>
</comment>
<name>NAF1_MOUSE</name>
<evidence type="ECO:0000250" key="1"/>
<evidence type="ECO:0000250" key="2">
    <source>
        <dbReference type="UniProtKB" id="P53919"/>
    </source>
</evidence>
<evidence type="ECO:0000250" key="3">
    <source>
        <dbReference type="UniProtKB" id="Q96HR8"/>
    </source>
</evidence>
<evidence type="ECO:0000256" key="4">
    <source>
        <dbReference type="SAM" id="MobiDB-lite"/>
    </source>
</evidence>
<evidence type="ECO:0000269" key="5">
    <source>
    </source>
</evidence>
<evidence type="ECO:0000305" key="6"/>
<evidence type="ECO:0007744" key="7">
    <source>
    </source>
</evidence>
<evidence type="ECO:0007744" key="8">
    <source>
    </source>
</evidence>
<feature type="chain" id="PRO_0000315638" description="H/ACA ribonucleoprotein complex non-core subunit NAF1">
    <location>
        <begin position="1"/>
        <end position="489"/>
    </location>
</feature>
<feature type="region of interest" description="Disordered" evidence="4">
    <location>
        <begin position="1"/>
        <end position="150"/>
    </location>
</feature>
<feature type="region of interest" description="Disordered" evidence="4">
    <location>
        <begin position="289"/>
        <end position="339"/>
    </location>
</feature>
<feature type="region of interest" description="Disordered" evidence="4">
    <location>
        <begin position="421"/>
        <end position="489"/>
    </location>
</feature>
<feature type="compositionally biased region" description="Pro residues" evidence="4">
    <location>
        <begin position="35"/>
        <end position="70"/>
    </location>
</feature>
<feature type="compositionally biased region" description="Pro residues" evidence="4">
    <location>
        <begin position="77"/>
        <end position="91"/>
    </location>
</feature>
<feature type="compositionally biased region" description="Acidic residues" evidence="4">
    <location>
        <begin position="113"/>
        <end position="123"/>
    </location>
</feature>
<feature type="compositionally biased region" description="Low complexity" evidence="4">
    <location>
        <begin position="124"/>
        <end position="138"/>
    </location>
</feature>
<feature type="compositionally biased region" description="Basic and acidic residues" evidence="4">
    <location>
        <begin position="289"/>
        <end position="298"/>
    </location>
</feature>
<feature type="compositionally biased region" description="Basic residues" evidence="4">
    <location>
        <begin position="317"/>
        <end position="330"/>
    </location>
</feature>
<feature type="compositionally biased region" description="Pro residues" evidence="4">
    <location>
        <begin position="427"/>
        <end position="441"/>
    </location>
</feature>
<feature type="compositionally biased region" description="Pro residues" evidence="4">
    <location>
        <begin position="460"/>
        <end position="477"/>
    </location>
</feature>
<feature type="compositionally biased region" description="Polar residues" evidence="4">
    <location>
        <begin position="478"/>
        <end position="489"/>
    </location>
</feature>
<feature type="modified residue" description="N-acetylmethionine" evidence="3">
    <location>
        <position position="1"/>
    </location>
</feature>
<feature type="modified residue" description="Phosphoserine" evidence="7 8">
    <location>
        <position position="308"/>
    </location>
</feature>
<feature type="cross-link" description="Glycyl lysine isopeptide (Lys-Gly) (interchain with G-Cter in SUMO2)" evidence="3">
    <location>
        <position position="331"/>
    </location>
</feature>